<feature type="chain" id="PRO_0000295197" description="CUGBP Elav-like family member 3">
    <location>
        <begin position="1"/>
        <end position="461"/>
    </location>
</feature>
<feature type="domain" description="RRM 1" evidence="2">
    <location>
        <begin position="7"/>
        <end position="88"/>
    </location>
</feature>
<feature type="domain" description="RRM 2" evidence="2">
    <location>
        <begin position="95"/>
        <end position="175"/>
    </location>
</feature>
<feature type="domain" description="RRM 3" evidence="2">
    <location>
        <begin position="376"/>
        <end position="454"/>
    </location>
</feature>
<feature type="region of interest" description="Disordered" evidence="3">
    <location>
        <begin position="345"/>
        <end position="375"/>
    </location>
</feature>
<feature type="compositionally biased region" description="Pro residues" evidence="3">
    <location>
        <begin position="345"/>
        <end position="358"/>
    </location>
</feature>
<feature type="compositionally biased region" description="Low complexity" evidence="3">
    <location>
        <begin position="359"/>
        <end position="369"/>
    </location>
</feature>
<reference key="1">
    <citation type="submission" date="2006-09" db="EMBL/GenBank/DDBJ databases">
        <authorList>
            <consortium name="NIH - Mammalian Gene Collection (MGC) project"/>
        </authorList>
    </citation>
    <scope>NUCLEOTIDE SEQUENCE [LARGE SCALE MRNA]</scope>
    <source>
        <strain>Hereford</strain>
        <tissue>Brain cortex</tissue>
    </source>
</reference>
<proteinExistence type="evidence at transcript level"/>
<keyword id="KW-0010">Activator</keyword>
<keyword id="KW-0963">Cytoplasm</keyword>
<keyword id="KW-0507">mRNA processing</keyword>
<keyword id="KW-0508">mRNA splicing</keyword>
<keyword id="KW-0539">Nucleus</keyword>
<keyword id="KW-1185">Reference proteome</keyword>
<keyword id="KW-0677">Repeat</keyword>
<keyword id="KW-0694">RNA-binding</keyword>
<protein>
    <recommendedName>
        <fullName>CUGBP Elav-like family member 3</fullName>
        <shortName>CELF-3</shortName>
    </recommendedName>
    <alternativeName>
        <fullName>Bruno-like protein 1</fullName>
    </alternativeName>
    <alternativeName>
        <fullName>CUG-BP- and ETR-3-like factor 3</fullName>
    </alternativeName>
    <alternativeName>
        <fullName>ELAV-type RNA-binding protein 1</fullName>
        <shortName>ETR-1</shortName>
    </alternativeName>
    <alternativeName>
        <fullName>RNA-binding protein BRUNOL-1</fullName>
    </alternativeName>
    <alternativeName>
        <fullName>Trinucleotide repeat-containing gene 4 protein</fullName>
    </alternativeName>
</protein>
<evidence type="ECO:0000250" key="1"/>
<evidence type="ECO:0000255" key="2">
    <source>
        <dbReference type="PROSITE-ProRule" id="PRU00176"/>
    </source>
</evidence>
<evidence type="ECO:0000256" key="3">
    <source>
        <dbReference type="SAM" id="MobiDB-lite"/>
    </source>
</evidence>
<evidence type="ECO:0000305" key="4"/>
<comment type="function">
    <text evidence="1">RNA-binding protein involved in the regulation of pre-mRNA alternative splicing. Mediates exon inclusion and/or exclusion in pre-mRNA that are subject to tissue-specific and developmentally regulated alternative splicing. Specifically activates exon 5 inclusion of cardiac isoforms of TNNT2 during heart remodeling at the juvenile to adult transition. Activates the splicing of MAPT/Tau exon 10. Binds to muscle-specific splicing enhancer (MSE) intronic sites flanking the alternative exon 5 of TNNT2 pre-mRNA (By similarity).</text>
</comment>
<comment type="subcellular location">
    <subcellularLocation>
        <location evidence="1">Nucleus</location>
    </subcellularLocation>
    <subcellularLocation>
        <location evidence="1">Cytoplasm</location>
    </subcellularLocation>
</comment>
<comment type="similarity">
    <text evidence="4">Belongs to the CELF/BRUNOL family.</text>
</comment>
<gene>
    <name type="primary">CELF3</name>
    <name type="synonym">TNRC4</name>
</gene>
<dbReference type="EMBL" id="BC123480">
    <property type="protein sequence ID" value="AAI23481.1"/>
    <property type="molecule type" value="mRNA"/>
</dbReference>
<dbReference type="RefSeq" id="NP_001070313.1">
    <property type="nucleotide sequence ID" value="NM_001076845.1"/>
</dbReference>
<dbReference type="SMR" id="Q08E07"/>
<dbReference type="FunCoup" id="Q08E07">
    <property type="interactions" value="831"/>
</dbReference>
<dbReference type="STRING" id="9913.ENSBTAP00000033756"/>
<dbReference type="PaxDb" id="9913-ENSBTAP00000033756"/>
<dbReference type="GeneID" id="513347"/>
<dbReference type="KEGG" id="bta:513347"/>
<dbReference type="CTD" id="11189"/>
<dbReference type="VEuPathDB" id="HostDB:ENSBTAG00000019131"/>
<dbReference type="eggNOG" id="KOG0146">
    <property type="taxonomic scope" value="Eukaryota"/>
</dbReference>
<dbReference type="HOGENOM" id="CLU_015367_0_1_1"/>
<dbReference type="InParanoid" id="Q08E07"/>
<dbReference type="OMA" id="SPMTLNY"/>
<dbReference type="OrthoDB" id="410044at2759"/>
<dbReference type="TreeFam" id="TF314924"/>
<dbReference type="Proteomes" id="UP000009136">
    <property type="component" value="Chromosome 3"/>
</dbReference>
<dbReference type="Bgee" id="ENSBTAG00000019131">
    <property type="expression patterns" value="Expressed in retina and 49 other cell types or tissues"/>
</dbReference>
<dbReference type="GO" id="GO:0005737">
    <property type="term" value="C:cytoplasm"/>
    <property type="evidence" value="ECO:0000318"/>
    <property type="project" value="GO_Central"/>
</dbReference>
<dbReference type="GO" id="GO:0005634">
    <property type="term" value="C:nucleus"/>
    <property type="evidence" value="ECO:0000318"/>
    <property type="project" value="GO_Central"/>
</dbReference>
<dbReference type="GO" id="GO:1990904">
    <property type="term" value="C:ribonucleoprotein complex"/>
    <property type="evidence" value="ECO:0000318"/>
    <property type="project" value="GO_Central"/>
</dbReference>
<dbReference type="GO" id="GO:0003729">
    <property type="term" value="F:mRNA binding"/>
    <property type="evidence" value="ECO:0000318"/>
    <property type="project" value="GO_Central"/>
</dbReference>
<dbReference type="GO" id="GO:0006376">
    <property type="term" value="P:mRNA splice site recognition"/>
    <property type="evidence" value="ECO:0000318"/>
    <property type="project" value="GO_Central"/>
</dbReference>
<dbReference type="GO" id="GO:0048026">
    <property type="term" value="P:positive regulation of mRNA splicing, via spliceosome"/>
    <property type="evidence" value="ECO:0000250"/>
    <property type="project" value="UniProtKB"/>
</dbReference>
<dbReference type="GO" id="GO:0000381">
    <property type="term" value="P:regulation of alternative mRNA splicing, via spliceosome"/>
    <property type="evidence" value="ECO:0000318"/>
    <property type="project" value="GO_Central"/>
</dbReference>
<dbReference type="CDD" id="cd12632">
    <property type="entry name" value="RRM1_CELF3_4_5_6"/>
    <property type="match status" value="1"/>
</dbReference>
<dbReference type="CDD" id="cd12635">
    <property type="entry name" value="RRM2_CELF3_4_5_6"/>
    <property type="match status" value="1"/>
</dbReference>
<dbReference type="CDD" id="cd12639">
    <property type="entry name" value="RRM3_CELF3_4_5_6"/>
    <property type="match status" value="1"/>
</dbReference>
<dbReference type="FunFam" id="3.30.70.330:FF:000007">
    <property type="entry name" value="CUGBP Elav-like family member 4 isoform 3"/>
    <property type="match status" value="1"/>
</dbReference>
<dbReference type="FunFam" id="3.30.70.330:FF:000010">
    <property type="entry name" value="CUGBP Elav-like family member 4 isoform 3"/>
    <property type="match status" value="1"/>
</dbReference>
<dbReference type="FunFam" id="3.30.70.330:FF:000148">
    <property type="entry name" value="Putative CUGBP Elav-like family member 3"/>
    <property type="match status" value="1"/>
</dbReference>
<dbReference type="Gene3D" id="3.30.70.330">
    <property type="match status" value="3"/>
</dbReference>
<dbReference type="InterPro" id="IPR034648">
    <property type="entry name" value="CELF3/4/5/6_RRM1"/>
</dbReference>
<dbReference type="InterPro" id="IPR012677">
    <property type="entry name" value="Nucleotide-bd_a/b_plait_sf"/>
</dbReference>
<dbReference type="InterPro" id="IPR035979">
    <property type="entry name" value="RBD_domain_sf"/>
</dbReference>
<dbReference type="InterPro" id="IPR000504">
    <property type="entry name" value="RRM_dom"/>
</dbReference>
<dbReference type="PANTHER" id="PTHR24012">
    <property type="entry name" value="RNA BINDING PROTEIN"/>
    <property type="match status" value="1"/>
</dbReference>
<dbReference type="Pfam" id="PF00076">
    <property type="entry name" value="RRM_1"/>
    <property type="match status" value="3"/>
</dbReference>
<dbReference type="SMART" id="SM00360">
    <property type="entry name" value="RRM"/>
    <property type="match status" value="3"/>
</dbReference>
<dbReference type="SUPFAM" id="SSF54928">
    <property type="entry name" value="RNA-binding domain, RBD"/>
    <property type="match status" value="2"/>
</dbReference>
<dbReference type="PROSITE" id="PS50102">
    <property type="entry name" value="RRM"/>
    <property type="match status" value="3"/>
</dbReference>
<name>CELF3_BOVIN</name>
<organism>
    <name type="scientific">Bos taurus</name>
    <name type="common">Bovine</name>
    <dbReference type="NCBI Taxonomy" id="9913"/>
    <lineage>
        <taxon>Eukaryota</taxon>
        <taxon>Metazoa</taxon>
        <taxon>Chordata</taxon>
        <taxon>Craniata</taxon>
        <taxon>Vertebrata</taxon>
        <taxon>Euteleostomi</taxon>
        <taxon>Mammalia</taxon>
        <taxon>Eutheria</taxon>
        <taxon>Laurasiatheria</taxon>
        <taxon>Artiodactyla</taxon>
        <taxon>Ruminantia</taxon>
        <taxon>Pecora</taxon>
        <taxon>Bovidae</taxon>
        <taxon>Bovinae</taxon>
        <taxon>Bos</taxon>
    </lineage>
</organism>
<accession>Q08E07</accession>
<sequence>MKEPDAIKLFVGQIPRHLEEKDLKPIFEQFGRIFELTVIKDKYTGLHKGCAFLTYCARDSALKAQSALHEQKTLPGMNRPIQVKPADSESRGEDRKLFVGMLGKQQTDEDVRKMFEPFGTIDECTVLRGPDGTSKGCAFVKFQTHAEAQAAINTLHSSRTLPGASSSLVVKFADTEKERGLRRMQQVATQLGMFSPIALQFGAYSAYTQALMQQQAALVAAHSAYLSPMATMAAVQMQHMAAINANGLIATPITPSSGTSTPPAIAATPVSAIPAALGVNGYSPVPTQPTGQPAPDALYPNGVHPYPAQSPAAPVDPLQQAYAGMQHYTAYPAAYSLVAPAFPQPPALVAQQPPPPPQQQQQQQQQQQQREGPDGCNIFIYHLPQEFTDSEILQMFVPFGHVISAKVFVDRATNQSKCFGFVSFDNPASAQAAIQAMNGFQIGMKRLKVQLKRPKDANRPY</sequence>